<keyword id="KW-0997">Cell inner membrane</keyword>
<keyword id="KW-1003">Cell membrane</keyword>
<keyword id="KW-0285">Flavoprotein</keyword>
<keyword id="KW-0288">FMN</keyword>
<keyword id="KW-0406">Ion transport</keyword>
<keyword id="KW-0472">Membrane</keyword>
<keyword id="KW-0520">NAD</keyword>
<keyword id="KW-0597">Phosphoprotein</keyword>
<keyword id="KW-1185">Reference proteome</keyword>
<keyword id="KW-0915">Sodium</keyword>
<keyword id="KW-0739">Sodium transport</keyword>
<keyword id="KW-1278">Translocase</keyword>
<keyword id="KW-0812">Transmembrane</keyword>
<keyword id="KW-1133">Transmembrane helix</keyword>
<keyword id="KW-0813">Transport</keyword>
<keyword id="KW-0830">Ubiquinone</keyword>
<accession>Q1QX85</accession>
<name>NQRB_CHRSD</name>
<comment type="function">
    <text evidence="1">NQR complex catalyzes the reduction of ubiquinone-1 to ubiquinol by two successive reactions, coupled with the transport of Na(+) ions from the cytoplasm to the periplasm. NqrA to NqrE are probably involved in the second step, the conversion of ubisemiquinone to ubiquinol.</text>
</comment>
<comment type="catalytic activity">
    <reaction evidence="1">
        <text>a ubiquinone + n Na(+)(in) + NADH + H(+) = a ubiquinol + n Na(+)(out) + NAD(+)</text>
        <dbReference type="Rhea" id="RHEA:47748"/>
        <dbReference type="Rhea" id="RHEA-COMP:9565"/>
        <dbReference type="Rhea" id="RHEA-COMP:9566"/>
        <dbReference type="ChEBI" id="CHEBI:15378"/>
        <dbReference type="ChEBI" id="CHEBI:16389"/>
        <dbReference type="ChEBI" id="CHEBI:17976"/>
        <dbReference type="ChEBI" id="CHEBI:29101"/>
        <dbReference type="ChEBI" id="CHEBI:57540"/>
        <dbReference type="ChEBI" id="CHEBI:57945"/>
        <dbReference type="EC" id="7.2.1.1"/>
    </reaction>
</comment>
<comment type="cofactor">
    <cofactor evidence="1">
        <name>FMN</name>
        <dbReference type="ChEBI" id="CHEBI:58210"/>
    </cofactor>
</comment>
<comment type="subunit">
    <text evidence="1">Composed of six subunits; NqrA, NqrB, NqrC, NqrD, NqrE and NqrF.</text>
</comment>
<comment type="subcellular location">
    <subcellularLocation>
        <location evidence="1">Cell inner membrane</location>
        <topology evidence="1">Multi-pass membrane protein</topology>
    </subcellularLocation>
</comment>
<comment type="similarity">
    <text evidence="1">Belongs to the NqrB/RnfD family.</text>
</comment>
<gene>
    <name evidence="1" type="primary">nqrB</name>
    <name type="ordered locus">Csal_1570</name>
</gene>
<sequence>MGIRNTLDKLEPHFHQGGKYEKFYALYEAVDTIFYSPPSVTKSTAHVRDGIDLKRIMITVWLCTFPAMFFGMYNAGLQANMAIGDGFGALGGWREAVTMALAGSHDPGSIWANFVLGATYFLPIYLVTFAVGGFWEVLFAVKRGHEVNEGFFVTSVLYALILPATIPLWQVALGITFGVVIGKEIFGGTGKNFLNPALTGRAFLYFAYPAQISGDSVWVAADGYTGATALSTAAQNGMSAVQQAYSWWDAFLGFIPGSVGETSTLAILIGAAVLLITRIASWRIMLGVFVGMALTAMLFTAIGSESNPMFGMPWYWHLVLGGFAFGMVFMATDPVSASMTDPGKLLFGFLIGVMTVLIRVVNPAFPEGIMLAILFANLFAPMIDHFFVQANIKRRMKRDAAYSPATNEETA</sequence>
<evidence type="ECO:0000255" key="1">
    <source>
        <dbReference type="HAMAP-Rule" id="MF_00426"/>
    </source>
</evidence>
<proteinExistence type="inferred from homology"/>
<reference key="1">
    <citation type="journal article" date="2011" name="Stand. Genomic Sci.">
        <title>Complete genome sequence of the halophilic and highly halotolerant Chromohalobacter salexigens type strain (1H11(T)).</title>
        <authorList>
            <person name="Copeland A."/>
            <person name="O'Connor K."/>
            <person name="Lucas S."/>
            <person name="Lapidus A."/>
            <person name="Berry K.W."/>
            <person name="Detter J.C."/>
            <person name="Del Rio T.G."/>
            <person name="Hammon N."/>
            <person name="Dalin E."/>
            <person name="Tice H."/>
            <person name="Pitluck S."/>
            <person name="Bruce D."/>
            <person name="Goodwin L."/>
            <person name="Han C."/>
            <person name="Tapia R."/>
            <person name="Saunders E."/>
            <person name="Schmutz J."/>
            <person name="Brettin T."/>
            <person name="Larimer F."/>
            <person name="Land M."/>
            <person name="Hauser L."/>
            <person name="Vargas C."/>
            <person name="Nieto J.J."/>
            <person name="Kyrpides N.C."/>
            <person name="Ivanova N."/>
            <person name="Goker M."/>
            <person name="Klenk H.P."/>
            <person name="Csonka L.N."/>
            <person name="Woyke T."/>
        </authorList>
    </citation>
    <scope>NUCLEOTIDE SEQUENCE [LARGE SCALE GENOMIC DNA]</scope>
    <source>
        <strain>ATCC BAA-138 / DSM 3043 / CIP 106854 / NCIMB 13768 / 1H11</strain>
    </source>
</reference>
<protein>
    <recommendedName>
        <fullName evidence="1">Na(+)-translocating NADH-quinone reductase subunit B</fullName>
        <shortName evidence="1">Na(+)-NQR subunit B</shortName>
        <shortName evidence="1">Na(+)-translocating NQR subunit B</shortName>
        <ecNumber evidence="1">7.2.1.1</ecNumber>
    </recommendedName>
    <alternativeName>
        <fullName evidence="1">NQR complex subunit B</fullName>
    </alternativeName>
    <alternativeName>
        <fullName evidence="1">NQR-1 subunit B</fullName>
    </alternativeName>
</protein>
<feature type="chain" id="PRO_1000060137" description="Na(+)-translocating NADH-quinone reductase subunit B">
    <location>
        <begin position="1"/>
        <end position="411"/>
    </location>
</feature>
<feature type="transmembrane region" description="Helical" evidence="1">
    <location>
        <begin position="56"/>
        <end position="76"/>
    </location>
</feature>
<feature type="transmembrane region" description="Helical" evidence="1">
    <location>
        <begin position="121"/>
        <end position="141"/>
    </location>
</feature>
<feature type="transmembrane region" description="Helical" evidence="1">
    <location>
        <begin position="161"/>
        <end position="181"/>
    </location>
</feature>
<feature type="transmembrane region" description="Helical" evidence="1">
    <location>
        <begin position="254"/>
        <end position="274"/>
    </location>
</feature>
<feature type="transmembrane region" description="Helical" evidence="1">
    <location>
        <begin position="284"/>
        <end position="304"/>
    </location>
</feature>
<feature type="transmembrane region" description="Helical" evidence="1">
    <location>
        <begin position="309"/>
        <end position="329"/>
    </location>
</feature>
<feature type="transmembrane region" description="Helical" evidence="1">
    <location>
        <begin position="345"/>
        <end position="365"/>
    </location>
</feature>
<feature type="transmembrane region" description="Helical" evidence="1">
    <location>
        <begin position="368"/>
        <end position="388"/>
    </location>
</feature>
<feature type="modified residue" description="FMN phosphoryl threonine" evidence="1">
    <location>
        <position position="228"/>
    </location>
</feature>
<dbReference type="EC" id="7.2.1.1" evidence="1"/>
<dbReference type="EMBL" id="CP000285">
    <property type="protein sequence ID" value="ABE58923.1"/>
    <property type="molecule type" value="Genomic_DNA"/>
</dbReference>
<dbReference type="RefSeq" id="WP_011506869.1">
    <property type="nucleotide sequence ID" value="NC_007963.1"/>
</dbReference>
<dbReference type="SMR" id="Q1QX85"/>
<dbReference type="STRING" id="290398.Csal_1570"/>
<dbReference type="GeneID" id="95334301"/>
<dbReference type="KEGG" id="csa:Csal_1570"/>
<dbReference type="eggNOG" id="COG1805">
    <property type="taxonomic scope" value="Bacteria"/>
</dbReference>
<dbReference type="HOGENOM" id="CLU_042020_1_1_6"/>
<dbReference type="OrthoDB" id="9776359at2"/>
<dbReference type="Proteomes" id="UP000000239">
    <property type="component" value="Chromosome"/>
</dbReference>
<dbReference type="GO" id="GO:0005886">
    <property type="term" value="C:plasma membrane"/>
    <property type="evidence" value="ECO:0007669"/>
    <property type="project" value="UniProtKB-SubCell"/>
</dbReference>
<dbReference type="GO" id="GO:0010181">
    <property type="term" value="F:FMN binding"/>
    <property type="evidence" value="ECO:0007669"/>
    <property type="project" value="InterPro"/>
</dbReference>
<dbReference type="GO" id="GO:0016655">
    <property type="term" value="F:oxidoreductase activity, acting on NAD(P)H, quinone or similar compound as acceptor"/>
    <property type="evidence" value="ECO:0007669"/>
    <property type="project" value="UniProtKB-UniRule"/>
</dbReference>
<dbReference type="GO" id="GO:0022904">
    <property type="term" value="P:respiratory electron transport chain"/>
    <property type="evidence" value="ECO:0007669"/>
    <property type="project" value="InterPro"/>
</dbReference>
<dbReference type="GO" id="GO:0006814">
    <property type="term" value="P:sodium ion transport"/>
    <property type="evidence" value="ECO:0007669"/>
    <property type="project" value="UniProtKB-UniRule"/>
</dbReference>
<dbReference type="GO" id="GO:0055085">
    <property type="term" value="P:transmembrane transport"/>
    <property type="evidence" value="ECO:0007669"/>
    <property type="project" value="InterPro"/>
</dbReference>
<dbReference type="HAMAP" id="MF_00426">
    <property type="entry name" value="NqrB"/>
    <property type="match status" value="1"/>
</dbReference>
<dbReference type="InterPro" id="IPR010966">
    <property type="entry name" value="NqrB"/>
</dbReference>
<dbReference type="InterPro" id="IPR004338">
    <property type="entry name" value="NqrB/RnfD"/>
</dbReference>
<dbReference type="NCBIfam" id="TIGR01937">
    <property type="entry name" value="nqrB"/>
    <property type="match status" value="1"/>
</dbReference>
<dbReference type="NCBIfam" id="NF003756">
    <property type="entry name" value="PRK05349.1"/>
    <property type="match status" value="1"/>
</dbReference>
<dbReference type="PANTHER" id="PTHR30578">
    <property type="entry name" value="ELECTRON TRANSPORT COMPLEX PROTEIN RNFD"/>
    <property type="match status" value="1"/>
</dbReference>
<dbReference type="PANTHER" id="PTHR30578:SF1">
    <property type="entry name" value="NA(+)-TRANSLOCATING NADH-QUINONE REDUCTASE SUBUNIT B"/>
    <property type="match status" value="1"/>
</dbReference>
<dbReference type="Pfam" id="PF03116">
    <property type="entry name" value="NQR2_RnfD_RnfE"/>
    <property type="match status" value="1"/>
</dbReference>
<dbReference type="PIRSF" id="PIRSF016055">
    <property type="entry name" value="NADH-UbQ_OxRdtase_B_su"/>
    <property type="match status" value="1"/>
</dbReference>
<organism>
    <name type="scientific">Chromohalobacter salexigens (strain ATCC BAA-138 / DSM 3043 / CIP 106854 / NCIMB 13768 / 1H11)</name>
    <dbReference type="NCBI Taxonomy" id="290398"/>
    <lineage>
        <taxon>Bacteria</taxon>
        <taxon>Pseudomonadati</taxon>
        <taxon>Pseudomonadota</taxon>
        <taxon>Gammaproteobacteria</taxon>
        <taxon>Oceanospirillales</taxon>
        <taxon>Halomonadaceae</taxon>
        <taxon>Chromohalobacter</taxon>
    </lineage>
</organism>